<protein>
    <recommendedName>
        <fullName>Hemoglobin subunit beta</fullName>
    </recommendedName>
    <alternativeName>
        <fullName>Beta-globin</fullName>
    </alternativeName>
    <alternativeName>
        <fullName>Hemoglobin beta chain</fullName>
    </alternativeName>
</protein>
<feature type="chain" id="PRO_0000052928" description="Hemoglobin subunit beta">
    <location>
        <begin position="1"/>
        <end position="146"/>
    </location>
</feature>
<feature type="domain" description="Globin" evidence="1">
    <location>
        <begin position="2"/>
        <end position="146"/>
    </location>
</feature>
<feature type="binding site" description="distal binding residue">
    <location>
        <position position="63"/>
    </location>
    <ligand>
        <name>heme b</name>
        <dbReference type="ChEBI" id="CHEBI:60344"/>
    </ligand>
    <ligandPart>
        <name>Fe</name>
        <dbReference type="ChEBI" id="CHEBI:18248"/>
    </ligandPart>
</feature>
<feature type="binding site" description="proximal binding residue">
    <location>
        <position position="92"/>
    </location>
    <ligand>
        <name>heme b</name>
        <dbReference type="ChEBI" id="CHEBI:60344"/>
    </ligand>
    <ligandPart>
        <name>Fe</name>
        <dbReference type="ChEBI" id="CHEBI:18248"/>
    </ligandPart>
</feature>
<gene>
    <name type="primary">HBB</name>
</gene>
<dbReference type="PIR" id="S00538">
    <property type="entry name" value="HBTTP"/>
</dbReference>
<dbReference type="SMR" id="P13274"/>
<dbReference type="OMA" id="LWGQIDV"/>
<dbReference type="Proteomes" id="UP000694380">
    <property type="component" value="Unplaced"/>
</dbReference>
<dbReference type="GO" id="GO:0072562">
    <property type="term" value="C:blood microparticle"/>
    <property type="evidence" value="ECO:0007669"/>
    <property type="project" value="TreeGrafter"/>
</dbReference>
<dbReference type="GO" id="GO:0031838">
    <property type="term" value="C:haptoglobin-hemoglobin complex"/>
    <property type="evidence" value="ECO:0007669"/>
    <property type="project" value="TreeGrafter"/>
</dbReference>
<dbReference type="GO" id="GO:0005833">
    <property type="term" value="C:hemoglobin complex"/>
    <property type="evidence" value="ECO:0007669"/>
    <property type="project" value="InterPro"/>
</dbReference>
<dbReference type="GO" id="GO:0031720">
    <property type="term" value="F:haptoglobin binding"/>
    <property type="evidence" value="ECO:0007669"/>
    <property type="project" value="TreeGrafter"/>
</dbReference>
<dbReference type="GO" id="GO:0020037">
    <property type="term" value="F:heme binding"/>
    <property type="evidence" value="ECO:0007669"/>
    <property type="project" value="InterPro"/>
</dbReference>
<dbReference type="GO" id="GO:0046872">
    <property type="term" value="F:metal ion binding"/>
    <property type="evidence" value="ECO:0007669"/>
    <property type="project" value="UniProtKB-KW"/>
</dbReference>
<dbReference type="GO" id="GO:0043177">
    <property type="term" value="F:organic acid binding"/>
    <property type="evidence" value="ECO:0007669"/>
    <property type="project" value="TreeGrafter"/>
</dbReference>
<dbReference type="GO" id="GO:0019825">
    <property type="term" value="F:oxygen binding"/>
    <property type="evidence" value="ECO:0007669"/>
    <property type="project" value="InterPro"/>
</dbReference>
<dbReference type="GO" id="GO:0005344">
    <property type="term" value="F:oxygen carrier activity"/>
    <property type="evidence" value="ECO:0007669"/>
    <property type="project" value="UniProtKB-KW"/>
</dbReference>
<dbReference type="GO" id="GO:0004601">
    <property type="term" value="F:peroxidase activity"/>
    <property type="evidence" value="ECO:0007669"/>
    <property type="project" value="TreeGrafter"/>
</dbReference>
<dbReference type="GO" id="GO:0042744">
    <property type="term" value="P:hydrogen peroxide catabolic process"/>
    <property type="evidence" value="ECO:0007669"/>
    <property type="project" value="TreeGrafter"/>
</dbReference>
<dbReference type="CDD" id="cd08925">
    <property type="entry name" value="Hb-beta-like"/>
    <property type="match status" value="1"/>
</dbReference>
<dbReference type="FunFam" id="1.10.490.10:FF:000001">
    <property type="entry name" value="Hemoglobin subunit beta"/>
    <property type="match status" value="1"/>
</dbReference>
<dbReference type="Gene3D" id="1.10.490.10">
    <property type="entry name" value="Globins"/>
    <property type="match status" value="1"/>
</dbReference>
<dbReference type="InterPro" id="IPR000971">
    <property type="entry name" value="Globin"/>
</dbReference>
<dbReference type="InterPro" id="IPR009050">
    <property type="entry name" value="Globin-like_sf"/>
</dbReference>
<dbReference type="InterPro" id="IPR012292">
    <property type="entry name" value="Globin/Proto"/>
</dbReference>
<dbReference type="InterPro" id="IPR002337">
    <property type="entry name" value="Hemoglobin_b"/>
</dbReference>
<dbReference type="InterPro" id="IPR050056">
    <property type="entry name" value="Hemoglobin_oxygen_transport"/>
</dbReference>
<dbReference type="PANTHER" id="PTHR11442">
    <property type="entry name" value="HEMOGLOBIN FAMILY MEMBER"/>
    <property type="match status" value="1"/>
</dbReference>
<dbReference type="PANTHER" id="PTHR11442:SF7">
    <property type="entry name" value="HEMOGLOBIN SUBUNIT EPSILON"/>
    <property type="match status" value="1"/>
</dbReference>
<dbReference type="Pfam" id="PF00042">
    <property type="entry name" value="Globin"/>
    <property type="match status" value="1"/>
</dbReference>
<dbReference type="PRINTS" id="PR00814">
    <property type="entry name" value="BETAHAEM"/>
</dbReference>
<dbReference type="SUPFAM" id="SSF46458">
    <property type="entry name" value="Globin-like"/>
    <property type="match status" value="1"/>
</dbReference>
<dbReference type="PROSITE" id="PS01033">
    <property type="entry name" value="GLOBIN"/>
    <property type="match status" value="1"/>
</dbReference>
<sequence length="146" mass="16304">VHWTADEKQLITSLWGKVNVEECGSEALARLLIVYPWTQRFFSTFGNLSNAEAILHNPHVHAHGKKVLTSFGEAVKNLDHIKQTFATLSKLHCEKLHVDPENFKLLGNVLIIVLASHFTKEFTPACQAAWQKLVSAVAHALALGYH</sequence>
<reference key="1">
    <citation type="journal article" date="1988" name="Biol. Chem. Hoppe-Seyler">
        <title>Hemoglobins of reptiles. The primary structure of the major and minor hemoglobin component of adult Western painted turtle (Chrysemys picta bellii).</title>
        <authorList>
            <person name="Ruecknagel K.P."/>
            <person name="Braunitzer G."/>
        </authorList>
    </citation>
    <scope>PROTEIN SEQUENCE</scope>
</reference>
<proteinExistence type="evidence at protein level"/>
<accession>P13274</accession>
<organism>
    <name type="scientific">Chrysemys picta bellii</name>
    <name type="common">Western painted turtle</name>
    <name type="synonym">Emys bellii</name>
    <dbReference type="NCBI Taxonomy" id="8478"/>
    <lineage>
        <taxon>Eukaryota</taxon>
        <taxon>Metazoa</taxon>
        <taxon>Chordata</taxon>
        <taxon>Craniata</taxon>
        <taxon>Vertebrata</taxon>
        <taxon>Euteleostomi</taxon>
        <taxon>Archelosauria</taxon>
        <taxon>Testudinata</taxon>
        <taxon>Testudines</taxon>
        <taxon>Cryptodira</taxon>
        <taxon>Durocryptodira</taxon>
        <taxon>Testudinoidea</taxon>
        <taxon>Emydidae</taxon>
        <taxon>Chrysemys</taxon>
    </lineage>
</organism>
<keyword id="KW-0903">Direct protein sequencing</keyword>
<keyword id="KW-0349">Heme</keyword>
<keyword id="KW-0408">Iron</keyword>
<keyword id="KW-0479">Metal-binding</keyword>
<keyword id="KW-0561">Oxygen transport</keyword>
<keyword id="KW-1185">Reference proteome</keyword>
<keyword id="KW-0813">Transport</keyword>
<evidence type="ECO:0000255" key="1">
    <source>
        <dbReference type="PROSITE-ProRule" id="PRU00238"/>
    </source>
</evidence>
<name>HBB_CHRPI</name>
<comment type="function">
    <text>Involved in oxygen transport from the lung to the various peripheral tissues.</text>
</comment>
<comment type="subunit">
    <text>Heterotetramer of two alpha chains and two beta chains.</text>
</comment>
<comment type="tissue specificity">
    <text>Red blood cells.</text>
</comment>
<comment type="similarity">
    <text evidence="1">Belongs to the globin family.</text>
</comment>